<organism>
    <name type="scientific">Phocaeicola vulgatus (strain ATCC 8482 / DSM 1447 / JCM 5826 / CCUG 4940 / NBRC 14291 / NCTC 11154)</name>
    <name type="common">Bacteroides vulgatus</name>
    <dbReference type="NCBI Taxonomy" id="435590"/>
    <lineage>
        <taxon>Bacteria</taxon>
        <taxon>Pseudomonadati</taxon>
        <taxon>Bacteroidota</taxon>
        <taxon>Bacteroidia</taxon>
        <taxon>Bacteroidales</taxon>
        <taxon>Bacteroidaceae</taxon>
        <taxon>Phocaeicola</taxon>
    </lineage>
</organism>
<gene>
    <name evidence="1" type="primary">rpmG</name>
    <name type="ordered locus">BVU_3280</name>
</gene>
<evidence type="ECO:0000255" key="1">
    <source>
        <dbReference type="HAMAP-Rule" id="MF_00294"/>
    </source>
</evidence>
<evidence type="ECO:0000305" key="2"/>
<accession>A6L5E5</accession>
<sequence>MAKKAKGNRVQVILECTEMKDSGMPGTSRYITTKNRKNTTERLELKKYNPILKRVTVHKEIK</sequence>
<name>RL33_PHOV8</name>
<reference key="1">
    <citation type="journal article" date="2007" name="PLoS Biol.">
        <title>Evolution of symbiotic bacteria in the distal human intestine.</title>
        <authorList>
            <person name="Xu J."/>
            <person name="Mahowald M.A."/>
            <person name="Ley R.E."/>
            <person name="Lozupone C.A."/>
            <person name="Hamady M."/>
            <person name="Martens E.C."/>
            <person name="Henrissat B."/>
            <person name="Coutinho P.M."/>
            <person name="Minx P."/>
            <person name="Latreille P."/>
            <person name="Cordum H."/>
            <person name="Van Brunt A."/>
            <person name="Kim K."/>
            <person name="Fulton R.S."/>
            <person name="Fulton L.A."/>
            <person name="Clifton S.W."/>
            <person name="Wilson R.K."/>
            <person name="Knight R.D."/>
            <person name="Gordon J.I."/>
        </authorList>
    </citation>
    <scope>NUCLEOTIDE SEQUENCE [LARGE SCALE GENOMIC DNA]</scope>
    <source>
        <strain>ATCC 8482 / DSM 1447 / JCM 5826 / CCUG 4940 / NBRC 14291 / NCTC 11154</strain>
    </source>
</reference>
<comment type="similarity">
    <text evidence="1">Belongs to the bacterial ribosomal protein bL33 family.</text>
</comment>
<protein>
    <recommendedName>
        <fullName evidence="1">Large ribosomal subunit protein bL33</fullName>
    </recommendedName>
    <alternativeName>
        <fullName evidence="2">50S ribosomal protein L33</fullName>
    </alternativeName>
</protein>
<keyword id="KW-0687">Ribonucleoprotein</keyword>
<keyword id="KW-0689">Ribosomal protein</keyword>
<feature type="chain" id="PRO_1000059271" description="Large ribosomal subunit protein bL33">
    <location>
        <begin position="1"/>
        <end position="62"/>
    </location>
</feature>
<proteinExistence type="inferred from homology"/>
<dbReference type="EMBL" id="CP000139">
    <property type="protein sequence ID" value="ABR40909.1"/>
    <property type="molecule type" value="Genomic_DNA"/>
</dbReference>
<dbReference type="RefSeq" id="WP_005841291.1">
    <property type="nucleotide sequence ID" value="NZ_JANSWM010000071.1"/>
</dbReference>
<dbReference type="SMR" id="A6L5E5"/>
<dbReference type="STRING" id="435590.BVU_3280"/>
<dbReference type="PaxDb" id="435590-BVU_3280"/>
<dbReference type="GeneID" id="93447320"/>
<dbReference type="KEGG" id="bvu:BVU_3280"/>
<dbReference type="eggNOG" id="COG0267">
    <property type="taxonomic scope" value="Bacteria"/>
</dbReference>
<dbReference type="HOGENOM" id="CLU_190949_3_0_10"/>
<dbReference type="BioCyc" id="BVUL435590:G1G59-3402-MONOMER"/>
<dbReference type="Proteomes" id="UP000002861">
    <property type="component" value="Chromosome"/>
</dbReference>
<dbReference type="GO" id="GO:0005737">
    <property type="term" value="C:cytoplasm"/>
    <property type="evidence" value="ECO:0007669"/>
    <property type="project" value="UniProtKB-ARBA"/>
</dbReference>
<dbReference type="GO" id="GO:1990904">
    <property type="term" value="C:ribonucleoprotein complex"/>
    <property type="evidence" value="ECO:0007669"/>
    <property type="project" value="UniProtKB-KW"/>
</dbReference>
<dbReference type="GO" id="GO:0005840">
    <property type="term" value="C:ribosome"/>
    <property type="evidence" value="ECO:0007669"/>
    <property type="project" value="UniProtKB-KW"/>
</dbReference>
<dbReference type="GO" id="GO:0003735">
    <property type="term" value="F:structural constituent of ribosome"/>
    <property type="evidence" value="ECO:0007669"/>
    <property type="project" value="InterPro"/>
</dbReference>
<dbReference type="GO" id="GO:0006412">
    <property type="term" value="P:translation"/>
    <property type="evidence" value="ECO:0007669"/>
    <property type="project" value="UniProtKB-UniRule"/>
</dbReference>
<dbReference type="Gene3D" id="2.20.28.120">
    <property type="entry name" value="Ribosomal protein L33"/>
    <property type="match status" value="1"/>
</dbReference>
<dbReference type="HAMAP" id="MF_00294">
    <property type="entry name" value="Ribosomal_bL33"/>
    <property type="match status" value="1"/>
</dbReference>
<dbReference type="InterPro" id="IPR001705">
    <property type="entry name" value="Ribosomal_bL33"/>
</dbReference>
<dbReference type="InterPro" id="IPR038584">
    <property type="entry name" value="Ribosomal_bL33_sf"/>
</dbReference>
<dbReference type="InterPro" id="IPR011332">
    <property type="entry name" value="Ribosomal_zn-bd"/>
</dbReference>
<dbReference type="NCBIfam" id="NF001764">
    <property type="entry name" value="PRK00504.1"/>
    <property type="match status" value="1"/>
</dbReference>
<dbReference type="NCBIfam" id="NF001860">
    <property type="entry name" value="PRK00595.1"/>
    <property type="match status" value="1"/>
</dbReference>
<dbReference type="NCBIfam" id="TIGR01023">
    <property type="entry name" value="rpmG_bact"/>
    <property type="match status" value="1"/>
</dbReference>
<dbReference type="PANTHER" id="PTHR43168">
    <property type="entry name" value="50S RIBOSOMAL PROTEIN L33, CHLOROPLASTIC"/>
    <property type="match status" value="1"/>
</dbReference>
<dbReference type="PANTHER" id="PTHR43168:SF2">
    <property type="entry name" value="LARGE RIBOSOMAL SUBUNIT PROTEIN BL33C"/>
    <property type="match status" value="1"/>
</dbReference>
<dbReference type="Pfam" id="PF00471">
    <property type="entry name" value="Ribosomal_L33"/>
    <property type="match status" value="1"/>
</dbReference>
<dbReference type="SUPFAM" id="SSF57829">
    <property type="entry name" value="Zn-binding ribosomal proteins"/>
    <property type="match status" value="1"/>
</dbReference>